<sequence length="430" mass="49222">MRVGIKVLGCPKNEADCEVLAGVLREGGHEIVFDVKDADVVVLDTCAFIEDAKRESIDEIFSFVDAKDQYGYKLVVKGCLVQRYYEELKKEIPEVDQWIGVADPEEIANAIENGTDLVPDQPETVYRYRKRIDLEERPYAYVKISDGCDRGCTFCSIPSFKGSLRSRSIEDITREVEDLLKEGKKEIILVAQDTTSYGIDLYRKQALPDLLRRLNSLNGEFWIRVMYLHPDHLTEEIISAMLELDKVVKYFDVPVQHGSDKILKLMGRTKSSEELKKMLSSIRERFPDAVLRTSIIVGFPGETEEDFEELKQFVEEIQFDKLGAFVYSDEEGTVAFNLKEKVDPEMAKRRQEELLLLQAEISNSRLDRFVGKKLKFLVEGKEGKFLVGRTWTEAPEVDGVVFVRGKGKIGDFLEVVIKEHDEYDMWGSVI</sequence>
<organism>
    <name type="scientific">Thermotoga maritima (strain ATCC 43589 / DSM 3109 / JCM 10099 / NBRC 100826 / MSB8)</name>
    <dbReference type="NCBI Taxonomy" id="243274"/>
    <lineage>
        <taxon>Bacteria</taxon>
        <taxon>Thermotogati</taxon>
        <taxon>Thermotogota</taxon>
        <taxon>Thermotogae</taxon>
        <taxon>Thermotogales</taxon>
        <taxon>Thermotogaceae</taxon>
        <taxon>Thermotoga</taxon>
    </lineage>
</organism>
<name>RIMO_THEMA</name>
<proteinExistence type="evidence at protein level"/>
<evidence type="ECO:0000255" key="1">
    <source>
        <dbReference type="HAMAP-Rule" id="MF_01865"/>
    </source>
</evidence>
<evidence type="ECO:0000255" key="2">
    <source>
        <dbReference type="PROSITE-ProRule" id="PRU01266"/>
    </source>
</evidence>
<evidence type="ECO:0000269" key="3">
    <source>
    </source>
</evidence>
<evidence type="ECO:0000269" key="4">
    <source>
    </source>
</evidence>
<evidence type="ECO:0000269" key="5">
    <source>
    </source>
</evidence>
<evidence type="ECO:0007744" key="6">
    <source>
        <dbReference type="PDB" id="2QGQ"/>
    </source>
</evidence>
<evidence type="ECO:0007744" key="7">
    <source>
        <dbReference type="PDB" id="4JC0"/>
    </source>
</evidence>
<evidence type="ECO:0007829" key="8">
    <source>
        <dbReference type="PDB" id="2QGQ"/>
    </source>
</evidence>
<evidence type="ECO:0007829" key="9">
    <source>
        <dbReference type="PDB" id="4JC0"/>
    </source>
</evidence>
<reference key="1">
    <citation type="journal article" date="1999" name="Nature">
        <title>Evidence for lateral gene transfer between Archaea and Bacteria from genome sequence of Thermotoga maritima.</title>
        <authorList>
            <person name="Nelson K.E."/>
            <person name="Clayton R.A."/>
            <person name="Gill S.R."/>
            <person name="Gwinn M.L."/>
            <person name="Dodson R.J."/>
            <person name="Haft D.H."/>
            <person name="Hickey E.K."/>
            <person name="Peterson J.D."/>
            <person name="Nelson W.C."/>
            <person name="Ketchum K.A."/>
            <person name="McDonald L.A."/>
            <person name="Utterback T.R."/>
            <person name="Malek J.A."/>
            <person name="Linher K.D."/>
            <person name="Garrett M.M."/>
            <person name="Stewart A.M."/>
            <person name="Cotton M.D."/>
            <person name="Pratt M.S."/>
            <person name="Phillips C.A."/>
            <person name="Richardson D.L."/>
            <person name="Heidelberg J.F."/>
            <person name="Sutton G.G."/>
            <person name="Fleischmann R.D."/>
            <person name="Eisen J.A."/>
            <person name="White O."/>
            <person name="Salzberg S.L."/>
            <person name="Smith H.O."/>
            <person name="Venter J.C."/>
            <person name="Fraser C.M."/>
        </authorList>
    </citation>
    <scope>NUCLEOTIDE SEQUENCE [LARGE SCALE GENOMIC DNA]</scope>
    <source>
        <strain>ATCC 43589 / DSM 3109 / JCM 10099 / NBRC 100826 / MSB8</strain>
    </source>
</reference>
<reference key="2">
    <citation type="journal article" date="2013" name="J. Am. Chem. Soc.">
        <title>Identification of an intermediate methyl carrier in the radical S-adenosylmethionine methylthiotransferases RimO and MiaB.</title>
        <authorList>
            <person name="Landgraf B.J."/>
            <person name="Arcinas A.J."/>
            <person name="Lee K.H."/>
            <person name="Booker S.J."/>
        </authorList>
    </citation>
    <scope>FUNCTION</scope>
    <scope>CATALYTIC ACTIVITY</scope>
    <scope>REACTION MECHANISM</scope>
</reference>
<reference evidence="6" key="3">
    <citation type="journal article" date="2010" name="J. Biol. Chem.">
        <title>Post-translational modification of ribosomal proteins: structural and functional characterization of RimO from Thermotoga maritima, a radical S-adenosylmethionine methylthiotransferase.</title>
        <authorList>
            <person name="Arragain S."/>
            <person name="Garcia-Serres R."/>
            <person name="Blondin G."/>
            <person name="Douki T."/>
            <person name="Clemancey M."/>
            <person name="Latour J.M."/>
            <person name="Forouhar F."/>
            <person name="Neely H."/>
            <person name="Montelione G.T."/>
            <person name="Hunt J.F."/>
            <person name="Mulliez E."/>
            <person name="Fontecave M."/>
            <person name="Atta M."/>
        </authorList>
    </citation>
    <scope>X-RAY CRYSTALLOGRAPHY (2.0 ANGSTROMS) OF 135-430</scope>
    <scope>FUNCTION</scope>
    <scope>CATALYTIC ACTIVITY</scope>
    <scope>COFACTOR</scope>
    <scope>SUBUNIT</scope>
    <scope>EPR SPECTROSCOPY</scope>
</reference>
<reference evidence="7" key="4">
    <citation type="journal article" date="2013" name="Nat. Chem. Biol.">
        <title>Two Fe-S clusters catalyze sulfur insertion by radical-SAM methylthiotransferases.</title>
        <authorList>
            <person name="Forouhar F."/>
            <person name="Arragain S."/>
            <person name="Atta M."/>
            <person name="Gambarelli S."/>
            <person name="Mouesca J.M."/>
            <person name="Hussain M."/>
            <person name="Xiao R."/>
            <person name="Kieffer-Jaquinod S."/>
            <person name="Seetharaman J."/>
            <person name="Acton T.B."/>
            <person name="Montelione G.T."/>
            <person name="Mulliez E."/>
            <person name="Hunt J.F."/>
            <person name="Fontecave M."/>
        </authorList>
    </citation>
    <scope>X-RAY CRYSTALLOGRAPHY (3.30 ANGSTROMS) IN COMPLEX WITH IRON-SULFUR CLUSTERS CONNECTED VIA A PENTA-SULFIDE BRIDGE</scope>
    <scope>FUNCTION</scope>
    <scope>COFACTOR</scope>
    <scope>CATALYTIC ACTIVITY</scope>
    <scope>EPR SPECTROSCOPY</scope>
</reference>
<accession>Q9X2H6</accession>
<feature type="chain" id="PRO_0000375052" description="Ribosomal protein uS12 methylthiotransferase RimO">
    <location>
        <begin position="1"/>
        <end position="430"/>
    </location>
</feature>
<feature type="domain" description="MTTase N-terminal" evidence="1">
    <location>
        <begin position="1"/>
        <end position="116"/>
    </location>
</feature>
<feature type="domain" description="Radical SAM core" evidence="2">
    <location>
        <begin position="134"/>
        <end position="365"/>
    </location>
</feature>
<feature type="domain" description="TRAM" evidence="1">
    <location>
        <begin position="367"/>
        <end position="430"/>
    </location>
</feature>
<feature type="binding site" evidence="1 4">
    <location>
        <position position="10"/>
    </location>
    <ligand>
        <name>[4Fe-4S] cluster</name>
        <dbReference type="ChEBI" id="CHEBI:49883"/>
        <label>1</label>
    </ligand>
</feature>
<feature type="binding site" evidence="1 4">
    <location>
        <position position="46"/>
    </location>
    <ligand>
        <name>[4Fe-4S] cluster</name>
        <dbReference type="ChEBI" id="CHEBI:49883"/>
        <label>1</label>
    </ligand>
</feature>
<feature type="binding site" evidence="1 4">
    <location>
        <position position="79"/>
    </location>
    <ligand>
        <name>[4Fe-4S] cluster</name>
        <dbReference type="ChEBI" id="CHEBI:49883"/>
        <label>1</label>
    </ligand>
</feature>
<feature type="binding site" evidence="1 4">
    <location>
        <position position="148"/>
    </location>
    <ligand>
        <name>[4Fe-4S] cluster</name>
        <dbReference type="ChEBI" id="CHEBI:49883"/>
        <label>2</label>
        <note>4Fe-4S-S-AdoMet</note>
    </ligand>
</feature>
<feature type="binding site" evidence="1 4">
    <location>
        <position position="152"/>
    </location>
    <ligand>
        <name>[4Fe-4S] cluster</name>
        <dbReference type="ChEBI" id="CHEBI:49883"/>
        <label>2</label>
        <note>4Fe-4S-S-AdoMet</note>
    </ligand>
</feature>
<feature type="binding site" evidence="1 4">
    <location>
        <position position="155"/>
    </location>
    <ligand>
        <name>[4Fe-4S] cluster</name>
        <dbReference type="ChEBI" id="CHEBI:49883"/>
        <label>2</label>
        <note>4Fe-4S-S-AdoMet</note>
    </ligand>
</feature>
<feature type="strand" evidence="9">
    <location>
        <begin position="3"/>
        <end position="6"/>
    </location>
</feature>
<feature type="helix" evidence="9">
    <location>
        <begin position="11"/>
        <end position="23"/>
    </location>
</feature>
<feature type="turn" evidence="9">
    <location>
        <begin position="24"/>
        <end position="26"/>
    </location>
</feature>
<feature type="strand" evidence="9">
    <location>
        <begin position="34"/>
        <end position="36"/>
    </location>
</feature>
<feature type="strand" evidence="9">
    <location>
        <begin position="39"/>
        <end position="45"/>
    </location>
</feature>
<feature type="strand" evidence="9">
    <location>
        <begin position="48"/>
        <end position="51"/>
    </location>
</feature>
<feature type="helix" evidence="9">
    <location>
        <begin position="52"/>
        <end position="55"/>
    </location>
</feature>
<feature type="helix" evidence="9">
    <location>
        <begin position="57"/>
        <end position="64"/>
    </location>
</feature>
<feature type="turn" evidence="9">
    <location>
        <begin position="68"/>
        <end position="70"/>
    </location>
</feature>
<feature type="strand" evidence="9">
    <location>
        <begin position="73"/>
        <end position="78"/>
    </location>
</feature>
<feature type="helix" evidence="9">
    <location>
        <begin position="79"/>
        <end position="82"/>
    </location>
</feature>
<feature type="helix" evidence="9">
    <location>
        <begin position="85"/>
        <end position="91"/>
    </location>
</feature>
<feature type="strand" evidence="9">
    <location>
        <begin position="97"/>
        <end position="99"/>
    </location>
</feature>
<feature type="turn" evidence="9">
    <location>
        <begin position="104"/>
        <end position="107"/>
    </location>
</feature>
<feature type="strand" evidence="8">
    <location>
        <begin position="138"/>
        <end position="145"/>
    </location>
</feature>
<feature type="helix" evidence="9">
    <location>
        <begin position="157"/>
        <end position="159"/>
    </location>
</feature>
<feature type="helix" evidence="8">
    <location>
        <begin position="169"/>
        <end position="181"/>
    </location>
</feature>
<feature type="strand" evidence="8">
    <location>
        <begin position="186"/>
        <end position="190"/>
    </location>
</feature>
<feature type="helix" evidence="8">
    <location>
        <begin position="194"/>
        <end position="196"/>
    </location>
</feature>
<feature type="helix" evidence="8">
    <location>
        <begin position="199"/>
        <end position="202"/>
    </location>
</feature>
<feature type="helix" evidence="8">
    <location>
        <begin position="207"/>
        <end position="215"/>
    </location>
</feature>
<feature type="strand" evidence="8">
    <location>
        <begin position="217"/>
        <end position="220"/>
    </location>
</feature>
<feature type="strand" evidence="8">
    <location>
        <begin position="222"/>
        <end position="225"/>
    </location>
</feature>
<feature type="helix" evidence="8">
    <location>
        <begin position="230"/>
        <end position="232"/>
    </location>
</feature>
<feature type="helix" evidence="8">
    <location>
        <begin position="235"/>
        <end position="243"/>
    </location>
</feature>
<feature type="strand" evidence="8">
    <location>
        <begin position="250"/>
        <end position="252"/>
    </location>
</feature>
<feature type="helix" evidence="8">
    <location>
        <begin position="260"/>
        <end position="265"/>
    </location>
</feature>
<feature type="helix" evidence="8">
    <location>
        <begin position="272"/>
        <end position="285"/>
    </location>
</feature>
<feature type="strand" evidence="8">
    <location>
        <begin position="290"/>
        <end position="297"/>
    </location>
</feature>
<feature type="helix" evidence="8">
    <location>
        <begin position="304"/>
        <end position="317"/>
    </location>
</feature>
<feature type="strand" evidence="8">
    <location>
        <begin position="320"/>
        <end position="326"/>
    </location>
</feature>
<feature type="turn" evidence="9">
    <location>
        <begin position="334"/>
        <end position="337"/>
    </location>
</feature>
<feature type="helix" evidence="8">
    <location>
        <begin position="344"/>
        <end position="367"/>
    </location>
</feature>
<feature type="turn" evidence="8">
    <location>
        <begin position="368"/>
        <end position="371"/>
    </location>
</feature>
<feature type="strand" evidence="8">
    <location>
        <begin position="373"/>
        <end position="382"/>
    </location>
</feature>
<feature type="strand" evidence="8">
    <location>
        <begin position="385"/>
        <end position="390"/>
    </location>
</feature>
<feature type="turn" evidence="8">
    <location>
        <begin position="395"/>
        <end position="397"/>
    </location>
</feature>
<feature type="strand" evidence="8">
    <location>
        <begin position="401"/>
        <end position="405"/>
    </location>
</feature>
<feature type="strand" evidence="8">
    <location>
        <begin position="412"/>
        <end position="421"/>
    </location>
</feature>
<feature type="strand" evidence="8">
    <location>
        <begin position="424"/>
        <end position="429"/>
    </location>
</feature>
<gene>
    <name evidence="1" type="primary">rimO</name>
    <name type="ordered locus">TM_1862</name>
</gene>
<protein>
    <recommendedName>
        <fullName evidence="1">Ribosomal protein uS12 methylthiotransferase RimO</fullName>
        <shortName evidence="1">uS12 MTTase</shortName>
        <shortName evidence="1">uS12 methylthiotransferase</shortName>
        <ecNumber evidence="1 3 4 5">2.8.4.4</ecNumber>
    </recommendedName>
    <alternativeName>
        <fullName evidence="1">Ribosomal protein uS12 (aspartate-C(3))-methylthiotransferase</fullName>
    </alternativeName>
    <alternativeName>
        <fullName evidence="1">Ribosome maturation factor RimO</fullName>
    </alternativeName>
</protein>
<keyword id="KW-0002">3D-structure</keyword>
<keyword id="KW-0004">4Fe-4S</keyword>
<keyword id="KW-0963">Cytoplasm</keyword>
<keyword id="KW-0408">Iron</keyword>
<keyword id="KW-0411">Iron-sulfur</keyword>
<keyword id="KW-0479">Metal-binding</keyword>
<keyword id="KW-1185">Reference proteome</keyword>
<keyword id="KW-0949">S-adenosyl-L-methionine</keyword>
<keyword id="KW-0808">Transferase</keyword>
<dbReference type="EC" id="2.8.4.4" evidence="1 3 4 5"/>
<dbReference type="EMBL" id="AE000512">
    <property type="protein sequence ID" value="AAD36924.1"/>
    <property type="molecule type" value="Genomic_DNA"/>
</dbReference>
<dbReference type="PIR" id="G72201">
    <property type="entry name" value="G72201"/>
</dbReference>
<dbReference type="RefSeq" id="NP_229658.1">
    <property type="nucleotide sequence ID" value="NC_000853.1"/>
</dbReference>
<dbReference type="RefSeq" id="WP_004082413.1">
    <property type="nucleotide sequence ID" value="NZ_CP011107.1"/>
</dbReference>
<dbReference type="PDB" id="2QGQ">
    <property type="method" value="X-ray"/>
    <property type="resolution" value="2.00 A"/>
    <property type="chains" value="A/B/C/D/E/F/G/H=135-430"/>
</dbReference>
<dbReference type="PDB" id="4JC0">
    <property type="method" value="X-ray"/>
    <property type="resolution" value="3.30 A"/>
    <property type="chains" value="A/B=1-430"/>
</dbReference>
<dbReference type="PDBsum" id="2QGQ"/>
<dbReference type="PDBsum" id="4JC0"/>
<dbReference type="SMR" id="Q9X2H6"/>
<dbReference type="STRING" id="243274.TM_1862"/>
<dbReference type="PaxDb" id="243274-THEMA_04860"/>
<dbReference type="EnsemblBacteria" id="AAD36924">
    <property type="protein sequence ID" value="AAD36924"/>
    <property type="gene ID" value="TM_1862"/>
</dbReference>
<dbReference type="KEGG" id="tma:TM1862"/>
<dbReference type="KEGG" id="tmi:THEMA_04860"/>
<dbReference type="KEGG" id="tmm:Tmari_1877"/>
<dbReference type="KEGG" id="tmw:THMA_1912"/>
<dbReference type="eggNOG" id="COG0621">
    <property type="taxonomic scope" value="Bacteria"/>
</dbReference>
<dbReference type="InParanoid" id="Q9X2H6"/>
<dbReference type="OrthoDB" id="9805215at2"/>
<dbReference type="BRENDA" id="2.8.4.4">
    <property type="organism ID" value="6331"/>
</dbReference>
<dbReference type="EvolutionaryTrace" id="Q9X2H6"/>
<dbReference type="Proteomes" id="UP000008183">
    <property type="component" value="Chromosome"/>
</dbReference>
<dbReference type="GO" id="GO:0005829">
    <property type="term" value="C:cytosol"/>
    <property type="evidence" value="ECO:0000318"/>
    <property type="project" value="GO_Central"/>
</dbReference>
<dbReference type="GO" id="GO:0051539">
    <property type="term" value="F:4 iron, 4 sulfur cluster binding"/>
    <property type="evidence" value="ECO:0000318"/>
    <property type="project" value="GO_Central"/>
</dbReference>
<dbReference type="GO" id="GO:0035599">
    <property type="term" value="F:aspartic acid methylthiotransferase activity"/>
    <property type="evidence" value="ECO:0000318"/>
    <property type="project" value="GO_Central"/>
</dbReference>
<dbReference type="GO" id="GO:0046872">
    <property type="term" value="F:metal ion binding"/>
    <property type="evidence" value="ECO:0007669"/>
    <property type="project" value="UniProtKB-KW"/>
</dbReference>
<dbReference type="GO" id="GO:0103039">
    <property type="term" value="F:protein methylthiotransferase activity"/>
    <property type="evidence" value="ECO:0007669"/>
    <property type="project" value="UniProtKB-EC"/>
</dbReference>
<dbReference type="GO" id="GO:0006400">
    <property type="term" value="P:tRNA modification"/>
    <property type="evidence" value="ECO:0007669"/>
    <property type="project" value="InterPro"/>
</dbReference>
<dbReference type="CDD" id="cd01335">
    <property type="entry name" value="Radical_SAM"/>
    <property type="match status" value="1"/>
</dbReference>
<dbReference type="FunFam" id="2.40.50.140:FF:000210">
    <property type="entry name" value="Ribosomal protein S12 methylthiotransferase RimO"/>
    <property type="match status" value="1"/>
</dbReference>
<dbReference type="FunFam" id="3.40.50.12160:FF:000021">
    <property type="entry name" value="Ribosomal protein S12 methylthiotransferase RimO"/>
    <property type="match status" value="1"/>
</dbReference>
<dbReference type="FunFam" id="3.80.30.20:FF:000001">
    <property type="entry name" value="tRNA-2-methylthio-N(6)-dimethylallyladenosine synthase 2"/>
    <property type="match status" value="1"/>
</dbReference>
<dbReference type="Gene3D" id="3.40.50.12160">
    <property type="entry name" value="Methylthiotransferase, N-terminal domain"/>
    <property type="match status" value="1"/>
</dbReference>
<dbReference type="Gene3D" id="2.40.50.140">
    <property type="entry name" value="Nucleic acid-binding proteins"/>
    <property type="match status" value="1"/>
</dbReference>
<dbReference type="Gene3D" id="3.80.30.20">
    <property type="entry name" value="tm_1862 like domain"/>
    <property type="match status" value="1"/>
</dbReference>
<dbReference type="HAMAP" id="MF_01865">
    <property type="entry name" value="MTTase_RimO"/>
    <property type="match status" value="1"/>
</dbReference>
<dbReference type="InterPro" id="IPR006638">
    <property type="entry name" value="Elp3/MiaA/NifB-like_rSAM"/>
</dbReference>
<dbReference type="InterPro" id="IPR005839">
    <property type="entry name" value="Methylthiotransferase"/>
</dbReference>
<dbReference type="InterPro" id="IPR020612">
    <property type="entry name" value="Methylthiotransferase_CS"/>
</dbReference>
<dbReference type="InterPro" id="IPR013848">
    <property type="entry name" value="Methylthiotransferase_N"/>
</dbReference>
<dbReference type="InterPro" id="IPR038135">
    <property type="entry name" value="Methylthiotransferase_N_sf"/>
</dbReference>
<dbReference type="InterPro" id="IPR012340">
    <property type="entry name" value="NA-bd_OB-fold"/>
</dbReference>
<dbReference type="InterPro" id="IPR005840">
    <property type="entry name" value="Ribosomal_uS12_MeSTrfase_RimO"/>
</dbReference>
<dbReference type="InterPro" id="IPR007197">
    <property type="entry name" value="rSAM"/>
</dbReference>
<dbReference type="InterPro" id="IPR023404">
    <property type="entry name" value="rSAM_horseshoe"/>
</dbReference>
<dbReference type="InterPro" id="IPR002792">
    <property type="entry name" value="TRAM_dom"/>
</dbReference>
<dbReference type="NCBIfam" id="TIGR01125">
    <property type="entry name" value="30S ribosomal protein S12 methylthiotransferase RimO"/>
    <property type="match status" value="1"/>
</dbReference>
<dbReference type="NCBIfam" id="TIGR00089">
    <property type="entry name" value="MiaB/RimO family radical SAM methylthiotransferase"/>
    <property type="match status" value="1"/>
</dbReference>
<dbReference type="PANTHER" id="PTHR43837">
    <property type="entry name" value="RIBOSOMAL PROTEIN S12 METHYLTHIOTRANSFERASE RIMO"/>
    <property type="match status" value="1"/>
</dbReference>
<dbReference type="PANTHER" id="PTHR43837:SF1">
    <property type="entry name" value="RIBOSOMAL PROTEIN US12 METHYLTHIOTRANSFERASE RIMO"/>
    <property type="match status" value="1"/>
</dbReference>
<dbReference type="Pfam" id="PF04055">
    <property type="entry name" value="Radical_SAM"/>
    <property type="match status" value="1"/>
</dbReference>
<dbReference type="Pfam" id="PF18693">
    <property type="entry name" value="TRAM_2"/>
    <property type="match status" value="1"/>
</dbReference>
<dbReference type="Pfam" id="PF00919">
    <property type="entry name" value="UPF0004"/>
    <property type="match status" value="1"/>
</dbReference>
<dbReference type="SFLD" id="SFLDG01082">
    <property type="entry name" value="B12-binding_domain_containing"/>
    <property type="match status" value="1"/>
</dbReference>
<dbReference type="SFLD" id="SFLDS00029">
    <property type="entry name" value="Radical_SAM"/>
    <property type="match status" value="1"/>
</dbReference>
<dbReference type="SFLD" id="SFLDF00274">
    <property type="entry name" value="ribosomal_protein_S12_methylth"/>
    <property type="match status" value="1"/>
</dbReference>
<dbReference type="SMART" id="SM00729">
    <property type="entry name" value="Elp3"/>
    <property type="match status" value="1"/>
</dbReference>
<dbReference type="SUPFAM" id="SSF102114">
    <property type="entry name" value="Radical SAM enzymes"/>
    <property type="match status" value="1"/>
</dbReference>
<dbReference type="PROSITE" id="PS51449">
    <property type="entry name" value="MTTASE_N"/>
    <property type="match status" value="1"/>
</dbReference>
<dbReference type="PROSITE" id="PS01278">
    <property type="entry name" value="MTTASE_RADICAL"/>
    <property type="match status" value="1"/>
</dbReference>
<dbReference type="PROSITE" id="PS51918">
    <property type="entry name" value="RADICAL_SAM"/>
    <property type="match status" value="1"/>
</dbReference>
<dbReference type="PROSITE" id="PS50926">
    <property type="entry name" value="TRAM"/>
    <property type="match status" value="1"/>
</dbReference>
<comment type="function">
    <text evidence="1 3 4 5">Catalyzes the methylthiolation of an aspartic acid residue of ribosomal protein uS12.</text>
</comment>
<comment type="catalytic activity">
    <reaction evidence="1 3 4 5">
        <text>L-aspartate(89)-[ribosomal protein uS12]-hydrogen + (sulfur carrier)-SH + AH2 + 2 S-adenosyl-L-methionine = 3-methylsulfanyl-L-aspartate(89)-[ribosomal protein uS12]-hydrogen + (sulfur carrier)-H + 5'-deoxyadenosine + L-methionine + A + S-adenosyl-L-homocysteine + 2 H(+)</text>
        <dbReference type="Rhea" id="RHEA:37087"/>
        <dbReference type="Rhea" id="RHEA-COMP:10460"/>
        <dbReference type="Rhea" id="RHEA-COMP:10461"/>
        <dbReference type="Rhea" id="RHEA-COMP:14737"/>
        <dbReference type="Rhea" id="RHEA-COMP:14739"/>
        <dbReference type="ChEBI" id="CHEBI:13193"/>
        <dbReference type="ChEBI" id="CHEBI:15378"/>
        <dbReference type="ChEBI" id="CHEBI:17319"/>
        <dbReference type="ChEBI" id="CHEBI:17499"/>
        <dbReference type="ChEBI" id="CHEBI:29917"/>
        <dbReference type="ChEBI" id="CHEBI:29961"/>
        <dbReference type="ChEBI" id="CHEBI:57844"/>
        <dbReference type="ChEBI" id="CHEBI:57856"/>
        <dbReference type="ChEBI" id="CHEBI:59789"/>
        <dbReference type="ChEBI" id="CHEBI:64428"/>
        <dbReference type="ChEBI" id="CHEBI:73599"/>
        <dbReference type="EC" id="2.8.4.4"/>
    </reaction>
</comment>
<comment type="cofactor">
    <cofactor evidence="1 4">
        <name>[4Fe-4S] cluster</name>
        <dbReference type="ChEBI" id="CHEBI:49883"/>
    </cofactor>
    <text evidence="1 3 4">Binds 2 [4Fe-4S] clusters. One cluster is coordinated with 3 cysteines and an exchangeable S-adenosyl-L-methionine. The two iron atoms in each cluster are connected via a penta-sulfide bridge.</text>
</comment>
<comment type="subunit">
    <text evidence="4">Monomer.</text>
</comment>
<comment type="subcellular location">
    <subcellularLocation>
        <location evidence="1">Cytoplasm</location>
    </subcellularLocation>
</comment>
<comment type="similarity">
    <text evidence="1">Belongs to the methylthiotransferase family. RimO subfamily.</text>
</comment>